<name>PDRP_GEOKA</name>
<keyword id="KW-0418">Kinase</keyword>
<keyword id="KW-0547">Nucleotide-binding</keyword>
<keyword id="KW-1185">Reference proteome</keyword>
<keyword id="KW-0723">Serine/threonine-protein kinase</keyword>
<keyword id="KW-0808">Transferase</keyword>
<accession>Q5KX17</accession>
<evidence type="ECO:0000255" key="1">
    <source>
        <dbReference type="HAMAP-Rule" id="MF_00921"/>
    </source>
</evidence>
<sequence length="266" mass="29853">MNQRLVYVVSDSGGETAELVVKAAASQFHASPIQVKRVPYVEDKTTLAEVVALAKMNRAIIAFTLVVPEMREFLLAEAAREGVVAYDIIGPLIEKMSHLFQLTPRYEPGQVRVLDEDYFKKIEAIEFAVKYDDGRDPRGILRADIVLIGVSRTSKTPLSQYLAHKRLKVANVPIVPEVEPPEQLFRVGPGKCFGLKISPDKLLSIRRERLKSLGLNDQAIYANMDRIKEELAYFDEVVKKIGCDVIDVTNKAVEETASIIMKKLKR</sequence>
<proteinExistence type="inferred from homology"/>
<feature type="chain" id="PRO_0000196662" description="Putative pyruvate, phosphate dikinase regulatory protein">
    <location>
        <begin position="1"/>
        <end position="266"/>
    </location>
</feature>
<feature type="binding site" evidence="1">
    <location>
        <begin position="149"/>
        <end position="156"/>
    </location>
    <ligand>
        <name>ADP</name>
        <dbReference type="ChEBI" id="CHEBI:456216"/>
    </ligand>
</feature>
<protein>
    <recommendedName>
        <fullName evidence="1">Putative pyruvate, phosphate dikinase regulatory protein</fullName>
        <shortName evidence="1">PPDK regulatory protein</shortName>
        <ecNumber evidence="1">2.7.11.32</ecNumber>
        <ecNumber evidence="1">2.7.4.27</ecNumber>
    </recommendedName>
</protein>
<reference key="1">
    <citation type="journal article" date="2004" name="Nucleic Acids Res.">
        <title>Thermoadaptation trait revealed by the genome sequence of thermophilic Geobacillus kaustophilus.</title>
        <authorList>
            <person name="Takami H."/>
            <person name="Takaki Y."/>
            <person name="Chee G.-J."/>
            <person name="Nishi S."/>
            <person name="Shimamura S."/>
            <person name="Suzuki H."/>
            <person name="Matsui S."/>
            <person name="Uchiyama I."/>
        </authorList>
    </citation>
    <scope>NUCLEOTIDE SEQUENCE [LARGE SCALE GENOMIC DNA]</scope>
    <source>
        <strain>HTA426</strain>
    </source>
</reference>
<comment type="function">
    <text evidence="1">Bifunctional serine/threonine kinase and phosphorylase involved in the regulation of the pyruvate, phosphate dikinase (PPDK) by catalyzing its phosphorylation/dephosphorylation.</text>
</comment>
<comment type="catalytic activity">
    <reaction evidence="1">
        <text>N(tele)-phospho-L-histidyl/L-threonyl-[pyruvate, phosphate dikinase] + ADP = N(tele)-phospho-L-histidyl/O-phospho-L-threonyl-[pyruvate, phosphate dikinase] + AMP + H(+)</text>
        <dbReference type="Rhea" id="RHEA:43692"/>
        <dbReference type="Rhea" id="RHEA-COMP:10650"/>
        <dbReference type="Rhea" id="RHEA-COMP:10651"/>
        <dbReference type="ChEBI" id="CHEBI:15378"/>
        <dbReference type="ChEBI" id="CHEBI:30013"/>
        <dbReference type="ChEBI" id="CHEBI:61977"/>
        <dbReference type="ChEBI" id="CHEBI:83586"/>
        <dbReference type="ChEBI" id="CHEBI:456215"/>
        <dbReference type="ChEBI" id="CHEBI:456216"/>
        <dbReference type="EC" id="2.7.11.32"/>
    </reaction>
</comment>
<comment type="catalytic activity">
    <reaction evidence="1">
        <text>N(tele)-phospho-L-histidyl/O-phospho-L-threonyl-[pyruvate, phosphate dikinase] + phosphate + H(+) = N(tele)-phospho-L-histidyl/L-threonyl-[pyruvate, phosphate dikinase] + diphosphate</text>
        <dbReference type="Rhea" id="RHEA:43696"/>
        <dbReference type="Rhea" id="RHEA-COMP:10650"/>
        <dbReference type="Rhea" id="RHEA-COMP:10651"/>
        <dbReference type="ChEBI" id="CHEBI:15378"/>
        <dbReference type="ChEBI" id="CHEBI:30013"/>
        <dbReference type="ChEBI" id="CHEBI:33019"/>
        <dbReference type="ChEBI" id="CHEBI:43474"/>
        <dbReference type="ChEBI" id="CHEBI:61977"/>
        <dbReference type="ChEBI" id="CHEBI:83586"/>
        <dbReference type="EC" id="2.7.4.27"/>
    </reaction>
</comment>
<comment type="similarity">
    <text evidence="1">Belongs to the pyruvate, phosphate/water dikinase regulatory protein family. PDRP subfamily.</text>
</comment>
<gene>
    <name type="ordered locus">GK2484</name>
</gene>
<organism>
    <name type="scientific">Geobacillus kaustophilus (strain HTA426)</name>
    <dbReference type="NCBI Taxonomy" id="235909"/>
    <lineage>
        <taxon>Bacteria</taxon>
        <taxon>Bacillati</taxon>
        <taxon>Bacillota</taxon>
        <taxon>Bacilli</taxon>
        <taxon>Bacillales</taxon>
        <taxon>Anoxybacillaceae</taxon>
        <taxon>Geobacillus</taxon>
        <taxon>Geobacillus thermoleovorans group</taxon>
    </lineage>
</organism>
<dbReference type="EC" id="2.7.11.32" evidence="1"/>
<dbReference type="EC" id="2.7.4.27" evidence="1"/>
<dbReference type="EMBL" id="BA000043">
    <property type="protein sequence ID" value="BAD76769.1"/>
    <property type="molecule type" value="Genomic_DNA"/>
</dbReference>
<dbReference type="RefSeq" id="WP_011231964.1">
    <property type="nucleotide sequence ID" value="NC_006510.1"/>
</dbReference>
<dbReference type="SMR" id="Q5KX17"/>
<dbReference type="STRING" id="235909.GK2484"/>
<dbReference type="KEGG" id="gka:GK2484"/>
<dbReference type="eggNOG" id="COG1806">
    <property type="taxonomic scope" value="Bacteria"/>
</dbReference>
<dbReference type="HOGENOM" id="CLU_046206_2_1_9"/>
<dbReference type="Proteomes" id="UP000001172">
    <property type="component" value="Chromosome"/>
</dbReference>
<dbReference type="GO" id="GO:0043531">
    <property type="term" value="F:ADP binding"/>
    <property type="evidence" value="ECO:0007669"/>
    <property type="project" value="UniProtKB-UniRule"/>
</dbReference>
<dbReference type="GO" id="GO:0005524">
    <property type="term" value="F:ATP binding"/>
    <property type="evidence" value="ECO:0007669"/>
    <property type="project" value="InterPro"/>
</dbReference>
<dbReference type="GO" id="GO:0016776">
    <property type="term" value="F:phosphotransferase activity, phosphate group as acceptor"/>
    <property type="evidence" value="ECO:0007669"/>
    <property type="project" value="UniProtKB-UniRule"/>
</dbReference>
<dbReference type="GO" id="GO:0004674">
    <property type="term" value="F:protein serine/threonine kinase activity"/>
    <property type="evidence" value="ECO:0007669"/>
    <property type="project" value="UniProtKB-UniRule"/>
</dbReference>
<dbReference type="HAMAP" id="MF_00921">
    <property type="entry name" value="PDRP"/>
    <property type="match status" value="1"/>
</dbReference>
<dbReference type="InterPro" id="IPR005177">
    <property type="entry name" value="Kinase-pyrophosphorylase"/>
</dbReference>
<dbReference type="InterPro" id="IPR026565">
    <property type="entry name" value="PPDK_reg"/>
</dbReference>
<dbReference type="NCBIfam" id="NF003742">
    <property type="entry name" value="PRK05339.1"/>
    <property type="match status" value="1"/>
</dbReference>
<dbReference type="PANTHER" id="PTHR31756">
    <property type="entry name" value="PYRUVATE, PHOSPHATE DIKINASE REGULATORY PROTEIN 1, CHLOROPLASTIC"/>
    <property type="match status" value="1"/>
</dbReference>
<dbReference type="PANTHER" id="PTHR31756:SF3">
    <property type="entry name" value="PYRUVATE, PHOSPHATE DIKINASE REGULATORY PROTEIN 1, CHLOROPLASTIC"/>
    <property type="match status" value="1"/>
</dbReference>
<dbReference type="Pfam" id="PF03618">
    <property type="entry name" value="Kinase-PPPase"/>
    <property type="match status" value="1"/>
</dbReference>